<dbReference type="EC" id="2.8.1.9" evidence="2"/>
<dbReference type="EMBL" id="CM002236">
    <property type="protein sequence ID" value="ESA44393.1"/>
    <property type="molecule type" value="Genomic_DNA"/>
</dbReference>
<dbReference type="RefSeq" id="XP_011393025.1">
    <property type="nucleotide sequence ID" value="XM_011394723.1"/>
</dbReference>
<dbReference type="SMR" id="Q7SE17"/>
<dbReference type="STRING" id="367110.Q7SE17"/>
<dbReference type="PaxDb" id="5141-EFNCRP00000002451"/>
<dbReference type="EnsemblFungi" id="ESA44393">
    <property type="protein sequence ID" value="ESA44393"/>
    <property type="gene ID" value="NCU02777"/>
</dbReference>
<dbReference type="GeneID" id="3880421"/>
<dbReference type="KEGG" id="ncr:NCU02777"/>
<dbReference type="VEuPathDB" id="FungiDB:NCU02777"/>
<dbReference type="HOGENOM" id="CLU_010913_0_0_1"/>
<dbReference type="InParanoid" id="Q7SE17"/>
<dbReference type="OrthoDB" id="10264306at2759"/>
<dbReference type="UniPathway" id="UPA00344"/>
<dbReference type="Proteomes" id="UP000001805">
    <property type="component" value="Chromosome 1, Linkage Group I"/>
</dbReference>
<dbReference type="GO" id="GO:0016829">
    <property type="term" value="F:lyase activity"/>
    <property type="evidence" value="ECO:0007669"/>
    <property type="project" value="UniProtKB-UniRule"/>
</dbReference>
<dbReference type="GO" id="GO:0008265">
    <property type="term" value="F:molybdenum cofactor sulfurtransferase activity"/>
    <property type="evidence" value="ECO:0000318"/>
    <property type="project" value="GO_Central"/>
</dbReference>
<dbReference type="GO" id="GO:0030151">
    <property type="term" value="F:molybdenum ion binding"/>
    <property type="evidence" value="ECO:0007669"/>
    <property type="project" value="UniProtKB-UniRule"/>
</dbReference>
<dbReference type="GO" id="GO:0030170">
    <property type="term" value="F:pyridoxal phosphate binding"/>
    <property type="evidence" value="ECO:0007669"/>
    <property type="project" value="UniProtKB-UniRule"/>
</dbReference>
<dbReference type="GO" id="GO:0006777">
    <property type="term" value="P:Mo-molybdopterin cofactor biosynthetic process"/>
    <property type="evidence" value="ECO:0007669"/>
    <property type="project" value="UniProtKB-UniRule"/>
</dbReference>
<dbReference type="GO" id="GO:0043545">
    <property type="term" value="P:molybdopterin cofactor metabolic process"/>
    <property type="evidence" value="ECO:0000318"/>
    <property type="project" value="GO_Central"/>
</dbReference>
<dbReference type="Gene3D" id="3.90.1150.10">
    <property type="entry name" value="Aspartate Aminotransferase, domain 1"/>
    <property type="match status" value="1"/>
</dbReference>
<dbReference type="Gene3D" id="3.40.640.10">
    <property type="entry name" value="Type I PLP-dependent aspartate aminotransferase-like (Major domain)"/>
    <property type="match status" value="1"/>
</dbReference>
<dbReference type="HAMAP" id="MF_03050">
    <property type="entry name" value="MOCOS"/>
    <property type="match status" value="1"/>
</dbReference>
<dbReference type="InterPro" id="IPR000192">
    <property type="entry name" value="Aminotrans_V_dom"/>
</dbReference>
<dbReference type="InterPro" id="IPR005302">
    <property type="entry name" value="MoCF_Sase_C"/>
</dbReference>
<dbReference type="InterPro" id="IPR028886">
    <property type="entry name" value="MoCo_sulfurase"/>
</dbReference>
<dbReference type="InterPro" id="IPR005303">
    <property type="entry name" value="MOCOS_middle"/>
</dbReference>
<dbReference type="InterPro" id="IPR015424">
    <property type="entry name" value="PyrdxlP-dep_Trfase"/>
</dbReference>
<dbReference type="InterPro" id="IPR015421">
    <property type="entry name" value="PyrdxlP-dep_Trfase_major"/>
</dbReference>
<dbReference type="InterPro" id="IPR015422">
    <property type="entry name" value="PyrdxlP-dep_Trfase_small"/>
</dbReference>
<dbReference type="PANTHER" id="PTHR14237:SF19">
    <property type="entry name" value="MITOCHONDRIAL AMIDOXIME REDUCING COMPONENT 1"/>
    <property type="match status" value="1"/>
</dbReference>
<dbReference type="PANTHER" id="PTHR14237">
    <property type="entry name" value="MOLYBDOPTERIN COFACTOR SULFURASE MOSC"/>
    <property type="match status" value="1"/>
</dbReference>
<dbReference type="Pfam" id="PF00266">
    <property type="entry name" value="Aminotran_5"/>
    <property type="match status" value="1"/>
</dbReference>
<dbReference type="Pfam" id="PF03473">
    <property type="entry name" value="MOSC"/>
    <property type="match status" value="1"/>
</dbReference>
<dbReference type="Pfam" id="PF03476">
    <property type="entry name" value="MOSC_N"/>
    <property type="match status" value="1"/>
</dbReference>
<dbReference type="SUPFAM" id="SSF141673">
    <property type="entry name" value="MOSC N-terminal domain-like"/>
    <property type="match status" value="1"/>
</dbReference>
<dbReference type="SUPFAM" id="SSF53383">
    <property type="entry name" value="PLP-dependent transferases"/>
    <property type="match status" value="1"/>
</dbReference>
<dbReference type="PROSITE" id="PS51340">
    <property type="entry name" value="MOSC"/>
    <property type="match status" value="1"/>
</dbReference>
<accession>Q7SE17</accession>
<accession>A7UW68</accession>
<accession>V5IQE9</accession>
<evidence type="ECO:0000250" key="1">
    <source>
        <dbReference type="UniProtKB" id="Q96EN8"/>
    </source>
</evidence>
<evidence type="ECO:0000255" key="2">
    <source>
        <dbReference type="HAMAP-Rule" id="MF_03050"/>
    </source>
</evidence>
<evidence type="ECO:0000256" key="3">
    <source>
        <dbReference type="SAM" id="MobiDB-lite"/>
    </source>
</evidence>
<sequence>MGSLNIQHNGYDADVEKIREEEYPMLKDSIYLDHAGTTPYPKSLMDRFAQEMTTNLFGNPHSASASSQLSTQRIQDIRLRALQFFNADPADFDLVFVANATAGIKLVVEAMRCLPTGFDYVYHQSSHTSLVGVREEARSSVCLDTRQVEDWLSGSCPFDDNEDEERPILFAYPAQSNMDGRRFPLSWSSQICRQSLSPTNKRKTYTLLDAAALVSSSPLDLSNAETAPDFVVLSFYKIFGFPDLGALIVRKEVQDVFLSRRYFGGGTVDMVVCLKEQWHAPKDGFLHERLEDGTLPIHSIIALDVAMDVHAKLFGSMERVAGHTGFLARRLYQGLKGLRHANDELVCAIYSPDPETEESGPLVAFNIRNAQGIWISLAEVEKLATLKGIHIRTGGVCNPGGIASALGLEPWEMKQNFSSGFRCGTDNDTMGGKPTGIIRVSLGAMSTIADVDRFVQFVKEFYCEDTPPILPPPETKLDPSLRNTPELFIKSIVVYPIKSCAGFHVPPGIDWEVRPEGLVWDREWCLVHRGSGQALSQKRYPRMALLRPNLDFTKGELQVTFAGDISSSPGLPSSISVPLSKNPKMYAPKKSGMSSRVCGEEITPQTYASAQINDFFSTVLGVPCVLARFPPGGQGKGMTRHAKAHLQRHQHQQPHPAVSVSTRLTKPAMMPGAFPSPKAVETPPSPPDSDTERSATPTQEAQGPKPRRILLSNESPILAITSTSVDALNQSIALLNPSVSQPISEAVFRANLVLSPSPSTPSASPSNPLTPSPSPSTTSKPTPKPKQKPKQKLNPYEEDTWSSLTIFNSSSFSSSSSSCSTPSSSGFQTTTKFQMLGSCRRCHMVCIDQTTGSKTAGGEPFVTLSKTRRFEGKVFFGVHMGLQAEDEEDGHAEDIEKEGTGMGMGTGTGTGTGTRSMGGNGSVVKVRVGDVVRPSYL</sequence>
<proteinExistence type="inferred from homology"/>
<keyword id="KW-0501">Molybdenum cofactor biosynthesis</keyword>
<keyword id="KW-0663">Pyridoxal phosphate</keyword>
<keyword id="KW-1185">Reference proteome</keyword>
<keyword id="KW-0808">Transferase</keyword>
<reference key="1">
    <citation type="journal article" date="2003" name="Nature">
        <title>The genome sequence of the filamentous fungus Neurospora crassa.</title>
        <authorList>
            <person name="Galagan J.E."/>
            <person name="Calvo S.E."/>
            <person name="Borkovich K.A."/>
            <person name="Selker E.U."/>
            <person name="Read N.D."/>
            <person name="Jaffe D.B."/>
            <person name="FitzHugh W."/>
            <person name="Ma L.-J."/>
            <person name="Smirnov S."/>
            <person name="Purcell S."/>
            <person name="Rehman B."/>
            <person name="Elkins T."/>
            <person name="Engels R."/>
            <person name="Wang S."/>
            <person name="Nielsen C.B."/>
            <person name="Butler J."/>
            <person name="Endrizzi M."/>
            <person name="Qui D."/>
            <person name="Ianakiev P."/>
            <person name="Bell-Pedersen D."/>
            <person name="Nelson M.A."/>
            <person name="Werner-Washburne M."/>
            <person name="Selitrennikoff C.P."/>
            <person name="Kinsey J.A."/>
            <person name="Braun E.L."/>
            <person name="Zelter A."/>
            <person name="Schulte U."/>
            <person name="Kothe G.O."/>
            <person name="Jedd G."/>
            <person name="Mewes H.-W."/>
            <person name="Staben C."/>
            <person name="Marcotte E."/>
            <person name="Greenberg D."/>
            <person name="Roy A."/>
            <person name="Foley K."/>
            <person name="Naylor J."/>
            <person name="Stange-Thomann N."/>
            <person name="Barrett R."/>
            <person name="Gnerre S."/>
            <person name="Kamal M."/>
            <person name="Kamvysselis M."/>
            <person name="Mauceli E.W."/>
            <person name="Bielke C."/>
            <person name="Rudd S."/>
            <person name="Frishman D."/>
            <person name="Krystofova S."/>
            <person name="Rasmussen C."/>
            <person name="Metzenberg R.L."/>
            <person name="Perkins D.D."/>
            <person name="Kroken S."/>
            <person name="Cogoni C."/>
            <person name="Macino G."/>
            <person name="Catcheside D.E.A."/>
            <person name="Li W."/>
            <person name="Pratt R.J."/>
            <person name="Osmani S.A."/>
            <person name="DeSouza C.P.C."/>
            <person name="Glass N.L."/>
            <person name="Orbach M.J."/>
            <person name="Berglund J.A."/>
            <person name="Voelker R."/>
            <person name="Yarden O."/>
            <person name="Plamann M."/>
            <person name="Seiler S."/>
            <person name="Dunlap J.C."/>
            <person name="Radford A."/>
            <person name="Aramayo R."/>
            <person name="Natvig D.O."/>
            <person name="Alex L.A."/>
            <person name="Mannhaupt G."/>
            <person name="Ebbole D.J."/>
            <person name="Freitag M."/>
            <person name="Paulsen I."/>
            <person name="Sachs M.S."/>
            <person name="Lander E.S."/>
            <person name="Nusbaum C."/>
            <person name="Birren B.W."/>
        </authorList>
    </citation>
    <scope>NUCLEOTIDE SEQUENCE [LARGE SCALE GENOMIC DNA]</scope>
    <source>
        <strain>ATCC 24698 / 74-OR23-1A / CBS 708.71 / DSM 1257 / FGSC 987</strain>
    </source>
</reference>
<reference key="2">
    <citation type="journal article" date="1980" name="Genetics">
        <title>The isolation and characterization of mutants defective in nitrate assimilation in Neurospora crassa.</title>
        <authorList>
            <person name="Tomsett A.B."/>
            <person name="Garrett R.H."/>
        </authorList>
    </citation>
    <scope>GENE NAME</scope>
</reference>
<protein>
    <recommendedName>
        <fullName evidence="2">Molybdenum cofactor sulfurase</fullName>
        <shortName evidence="2">MCS</shortName>
        <shortName evidence="2">MOS</shortName>
        <shortName evidence="2">MoCo sulfurase</shortName>
        <ecNumber evidence="2">2.8.1.9</ecNumber>
    </recommendedName>
    <alternativeName>
        <fullName evidence="2">Molybdenum cofactor sulfurtransferase</fullName>
    </alternativeName>
    <alternativeName>
        <fullName>Nitrate nonutilizer protein 13</fullName>
    </alternativeName>
</protein>
<feature type="chain" id="PRO_0000423953" description="Molybdenum cofactor sulfurase">
    <location>
        <begin position="1"/>
        <end position="937"/>
    </location>
</feature>
<feature type="domain" description="MOSC" evidence="2">
    <location>
        <begin position="682"/>
        <end position="935"/>
    </location>
</feature>
<feature type="region of interest" description="Disordered" evidence="3">
    <location>
        <begin position="633"/>
        <end position="710"/>
    </location>
</feature>
<feature type="region of interest" description="Disordered" evidence="3">
    <location>
        <begin position="756"/>
        <end position="795"/>
    </location>
</feature>
<feature type="region of interest" description="Disordered" evidence="3">
    <location>
        <begin position="897"/>
        <end position="921"/>
    </location>
</feature>
<feature type="compositionally biased region" description="Basic residues" evidence="3">
    <location>
        <begin position="638"/>
        <end position="652"/>
    </location>
</feature>
<feature type="compositionally biased region" description="Low complexity" evidence="3">
    <location>
        <begin position="756"/>
        <end position="767"/>
    </location>
</feature>
<feature type="compositionally biased region" description="Gly residues" evidence="3">
    <location>
        <begin position="900"/>
        <end position="921"/>
    </location>
</feature>
<feature type="active site" evidence="2">
    <location>
        <position position="397"/>
    </location>
</feature>
<feature type="modified residue" description="N6-(pyridoxal phosphate)lysine" evidence="2">
    <location>
        <position position="237"/>
    </location>
</feature>
<gene>
    <name type="primary">nit-13</name>
    <name type="synonym">hxB</name>
    <name type="ORF">NCU02777</name>
    <name type="ORF">NCU21396</name>
</gene>
<comment type="function">
    <text evidence="2">Sulfurates the molybdenum cofactor. Sulfation of molybdenum is essential for xanthine dehydrogenase (XDH) and aldehyde oxidase (ADO) enzymes in which molybdenum cofactor is liganded by 1 oxygen and 1 sulfur atom in active form.</text>
</comment>
<comment type="catalytic activity">
    <reaction evidence="2">
        <text>Mo-molybdopterin + L-cysteine + AH2 = thio-Mo-molybdopterin + L-alanine + A + H2O</text>
        <dbReference type="Rhea" id="RHEA:42636"/>
        <dbReference type="ChEBI" id="CHEBI:13193"/>
        <dbReference type="ChEBI" id="CHEBI:15377"/>
        <dbReference type="ChEBI" id="CHEBI:17499"/>
        <dbReference type="ChEBI" id="CHEBI:35235"/>
        <dbReference type="ChEBI" id="CHEBI:57972"/>
        <dbReference type="ChEBI" id="CHEBI:71302"/>
        <dbReference type="ChEBI" id="CHEBI:82685"/>
        <dbReference type="EC" id="2.8.1.9"/>
    </reaction>
</comment>
<comment type="cofactor">
    <cofactor evidence="2">
        <name>pyridoxal 5'-phosphate</name>
        <dbReference type="ChEBI" id="CHEBI:597326"/>
    </cofactor>
</comment>
<comment type="pathway">
    <text evidence="1">Cofactor biosynthesis; molybdopterin biosynthesis.</text>
</comment>
<comment type="similarity">
    <text evidence="2">Belongs to the class-V pyridoxal-phosphate-dependent aminotransferase family. MOCOS subfamily.</text>
</comment>
<name>MOCOS_NEUCR</name>
<organism>
    <name type="scientific">Neurospora crassa (strain ATCC 24698 / 74-OR23-1A / CBS 708.71 / DSM 1257 / FGSC 987)</name>
    <dbReference type="NCBI Taxonomy" id="367110"/>
    <lineage>
        <taxon>Eukaryota</taxon>
        <taxon>Fungi</taxon>
        <taxon>Dikarya</taxon>
        <taxon>Ascomycota</taxon>
        <taxon>Pezizomycotina</taxon>
        <taxon>Sordariomycetes</taxon>
        <taxon>Sordariomycetidae</taxon>
        <taxon>Sordariales</taxon>
        <taxon>Sordariaceae</taxon>
        <taxon>Neurospora</taxon>
    </lineage>
</organism>